<gene>
    <name evidence="1" type="primary">ureAB</name>
    <name type="ordered locus">SCO5525</name>
    <name type="ORF">SC1C2.06</name>
</gene>
<protein>
    <recommendedName>
        <fullName evidence="1">Urease subunit gamma/beta</fullName>
        <ecNumber evidence="1">3.5.1.5</ecNumber>
    </recommendedName>
    <alternativeName>
        <fullName evidence="1">Urea amidohydrolase subunit gamma/beta</fullName>
    </alternativeName>
</protein>
<keyword id="KW-0963">Cytoplasm</keyword>
<keyword id="KW-0378">Hydrolase</keyword>
<keyword id="KW-1185">Reference proteome</keyword>
<sequence length="227" mass="23636">MRLTPTERDRLLLFGAAELARARRARGLRLNVPEATALIADTVCEAARDGARLAQAIERARSVLGPDDVLPGVADVVTEVHVEAVFDDGSRLAVVADPVGGGGLGDDAPGALLPGHDRPEPEAALRLPVTNTATVPVSVTSHFHFFEANPRLDFDRGRAYGMRLAVPAGSSVRFGPGERVEVGLVPIGGARVAIGFAGLVDGPLDAPGAREEALRRAAACGYLGADR</sequence>
<evidence type="ECO:0000255" key="1">
    <source>
        <dbReference type="HAMAP-Rule" id="MF_01955"/>
    </source>
</evidence>
<dbReference type="EC" id="3.5.1.5" evidence="1"/>
<dbReference type="EMBL" id="AL939124">
    <property type="protein sequence ID" value="CAA19973.1"/>
    <property type="molecule type" value="Genomic_DNA"/>
</dbReference>
<dbReference type="PIR" id="T29055">
    <property type="entry name" value="T29055"/>
</dbReference>
<dbReference type="RefSeq" id="NP_629659.1">
    <property type="nucleotide sequence ID" value="NC_003888.3"/>
</dbReference>
<dbReference type="SMR" id="O86507"/>
<dbReference type="STRING" id="100226.gene:17763177"/>
<dbReference type="PaxDb" id="100226-SCO5525"/>
<dbReference type="KEGG" id="sco:SCO5525"/>
<dbReference type="PATRIC" id="fig|100226.15.peg.5612"/>
<dbReference type="eggNOG" id="COG0831">
    <property type="taxonomic scope" value="Bacteria"/>
</dbReference>
<dbReference type="eggNOG" id="COG0832">
    <property type="taxonomic scope" value="Bacteria"/>
</dbReference>
<dbReference type="HOGENOM" id="CLU_000980_3_0_11"/>
<dbReference type="InParanoid" id="O86507"/>
<dbReference type="OrthoDB" id="9797217at2"/>
<dbReference type="PhylomeDB" id="O86507"/>
<dbReference type="UniPathway" id="UPA00258">
    <property type="reaction ID" value="UER00370"/>
</dbReference>
<dbReference type="Proteomes" id="UP000001973">
    <property type="component" value="Chromosome"/>
</dbReference>
<dbReference type="GO" id="GO:0035550">
    <property type="term" value="C:urease complex"/>
    <property type="evidence" value="ECO:0007669"/>
    <property type="project" value="InterPro"/>
</dbReference>
<dbReference type="GO" id="GO:0016151">
    <property type="term" value="F:nickel cation binding"/>
    <property type="evidence" value="ECO:0007669"/>
    <property type="project" value="InterPro"/>
</dbReference>
<dbReference type="GO" id="GO:0009039">
    <property type="term" value="F:urease activity"/>
    <property type="evidence" value="ECO:0000318"/>
    <property type="project" value="GO_Central"/>
</dbReference>
<dbReference type="GO" id="GO:0043419">
    <property type="term" value="P:urea catabolic process"/>
    <property type="evidence" value="ECO:0000318"/>
    <property type="project" value="GO_Central"/>
</dbReference>
<dbReference type="CDD" id="cd00407">
    <property type="entry name" value="Urease_beta"/>
    <property type="match status" value="1"/>
</dbReference>
<dbReference type="CDD" id="cd00390">
    <property type="entry name" value="Urease_gamma"/>
    <property type="match status" value="1"/>
</dbReference>
<dbReference type="Gene3D" id="2.10.150.10">
    <property type="entry name" value="Urease, beta subunit"/>
    <property type="match status" value="1"/>
</dbReference>
<dbReference type="Gene3D" id="3.30.280.10">
    <property type="entry name" value="Urease, gamma-like subunit"/>
    <property type="match status" value="1"/>
</dbReference>
<dbReference type="HAMAP" id="MF_01955">
    <property type="entry name" value="Urease_beta_gamma"/>
    <property type="match status" value="1"/>
</dbReference>
<dbReference type="InterPro" id="IPR002019">
    <property type="entry name" value="Urease_beta-like"/>
</dbReference>
<dbReference type="InterPro" id="IPR036461">
    <property type="entry name" value="Urease_betasu_sf"/>
</dbReference>
<dbReference type="InterPro" id="IPR008223">
    <property type="entry name" value="Urease_gamma-beta_su"/>
</dbReference>
<dbReference type="InterPro" id="IPR002026">
    <property type="entry name" value="Urease_gamma/gamma-beta_su"/>
</dbReference>
<dbReference type="InterPro" id="IPR036463">
    <property type="entry name" value="Urease_gamma_sf"/>
</dbReference>
<dbReference type="InterPro" id="IPR050069">
    <property type="entry name" value="Urease_subunit"/>
</dbReference>
<dbReference type="NCBIfam" id="NF009671">
    <property type="entry name" value="PRK13192.1"/>
    <property type="match status" value="1"/>
</dbReference>
<dbReference type="NCBIfam" id="TIGR00193">
    <property type="entry name" value="urease_gam"/>
    <property type="match status" value="1"/>
</dbReference>
<dbReference type="PANTHER" id="PTHR33569">
    <property type="entry name" value="UREASE"/>
    <property type="match status" value="1"/>
</dbReference>
<dbReference type="PANTHER" id="PTHR33569:SF1">
    <property type="entry name" value="UREASE"/>
    <property type="match status" value="1"/>
</dbReference>
<dbReference type="Pfam" id="PF00699">
    <property type="entry name" value="Urease_beta"/>
    <property type="match status" value="1"/>
</dbReference>
<dbReference type="Pfam" id="PF00547">
    <property type="entry name" value="Urease_gamma"/>
    <property type="match status" value="1"/>
</dbReference>
<dbReference type="PIRSF" id="PIRSF001225">
    <property type="entry name" value="Urease_gammabeta"/>
    <property type="match status" value="1"/>
</dbReference>
<dbReference type="SUPFAM" id="SSF51278">
    <property type="entry name" value="Urease, beta-subunit"/>
    <property type="match status" value="1"/>
</dbReference>
<dbReference type="SUPFAM" id="SSF54111">
    <property type="entry name" value="Urease, gamma-subunit"/>
    <property type="match status" value="1"/>
</dbReference>
<proteinExistence type="inferred from homology"/>
<name>URE23_STRCO</name>
<organism>
    <name type="scientific">Streptomyces coelicolor (strain ATCC BAA-471 / A3(2) / M145)</name>
    <dbReference type="NCBI Taxonomy" id="100226"/>
    <lineage>
        <taxon>Bacteria</taxon>
        <taxon>Bacillati</taxon>
        <taxon>Actinomycetota</taxon>
        <taxon>Actinomycetes</taxon>
        <taxon>Kitasatosporales</taxon>
        <taxon>Streptomycetaceae</taxon>
        <taxon>Streptomyces</taxon>
        <taxon>Streptomyces albidoflavus group</taxon>
    </lineage>
</organism>
<reference key="1">
    <citation type="journal article" date="2002" name="Nature">
        <title>Complete genome sequence of the model actinomycete Streptomyces coelicolor A3(2).</title>
        <authorList>
            <person name="Bentley S.D."/>
            <person name="Chater K.F."/>
            <person name="Cerdeno-Tarraga A.-M."/>
            <person name="Challis G.L."/>
            <person name="Thomson N.R."/>
            <person name="James K.D."/>
            <person name="Harris D.E."/>
            <person name="Quail M.A."/>
            <person name="Kieser H."/>
            <person name="Harper D."/>
            <person name="Bateman A."/>
            <person name="Brown S."/>
            <person name="Chandra G."/>
            <person name="Chen C.W."/>
            <person name="Collins M."/>
            <person name="Cronin A."/>
            <person name="Fraser A."/>
            <person name="Goble A."/>
            <person name="Hidalgo J."/>
            <person name="Hornsby T."/>
            <person name="Howarth S."/>
            <person name="Huang C.-H."/>
            <person name="Kieser T."/>
            <person name="Larke L."/>
            <person name="Murphy L.D."/>
            <person name="Oliver K."/>
            <person name="O'Neil S."/>
            <person name="Rabbinowitsch E."/>
            <person name="Rajandream M.A."/>
            <person name="Rutherford K.M."/>
            <person name="Rutter S."/>
            <person name="Seeger K."/>
            <person name="Saunders D."/>
            <person name="Sharp S."/>
            <person name="Squares R."/>
            <person name="Squares S."/>
            <person name="Taylor K."/>
            <person name="Warren T."/>
            <person name="Wietzorrek A."/>
            <person name="Woodward J.R."/>
            <person name="Barrell B.G."/>
            <person name="Parkhill J."/>
            <person name="Hopwood D.A."/>
        </authorList>
    </citation>
    <scope>NUCLEOTIDE SEQUENCE [LARGE SCALE GENOMIC DNA]</scope>
    <source>
        <strain>ATCC BAA-471 / A3(2) / M145</strain>
    </source>
</reference>
<accession>O86507</accession>
<feature type="chain" id="PRO_0000098079" description="Urease subunit gamma/beta">
    <location>
        <begin position="1"/>
        <end position="227"/>
    </location>
</feature>
<feature type="region of interest" description="Urease gamma">
    <location>
        <begin position="1"/>
        <end position="101"/>
    </location>
</feature>
<feature type="region of interest" description="Urease beta">
    <location>
        <begin position="102"/>
        <end position="227"/>
    </location>
</feature>
<comment type="catalytic activity">
    <reaction evidence="1">
        <text>urea + 2 H2O + H(+) = hydrogencarbonate + 2 NH4(+)</text>
        <dbReference type="Rhea" id="RHEA:20557"/>
        <dbReference type="ChEBI" id="CHEBI:15377"/>
        <dbReference type="ChEBI" id="CHEBI:15378"/>
        <dbReference type="ChEBI" id="CHEBI:16199"/>
        <dbReference type="ChEBI" id="CHEBI:17544"/>
        <dbReference type="ChEBI" id="CHEBI:28938"/>
        <dbReference type="EC" id="3.5.1.5"/>
    </reaction>
</comment>
<comment type="pathway">
    <text evidence="1">Nitrogen metabolism; urea degradation; CO(2) and NH(3) from urea (urease route): step 1/1.</text>
</comment>
<comment type="subunit">
    <text evidence="1">Heterohexamer of 3 UreC (alpha) and 3 UreAB (gamma/beta) subunits.</text>
</comment>
<comment type="subcellular location">
    <subcellularLocation>
        <location evidence="1">Cytoplasm</location>
    </subcellularLocation>
</comment>
<comment type="similarity">
    <text evidence="1">In the N-terminal section; belongs to the urease gamma subunit family.</text>
</comment>
<comment type="similarity">
    <text evidence="1">In the C-terminal section; belongs to the urease beta subunit family.</text>
</comment>